<accession>P62727</accession>
<accession>P12143</accession>
<gene>
    <name type="primary">rpl36</name>
    <name type="ordered locus">LOC_Osp1g00680</name>
</gene>
<keyword id="KW-0150">Chloroplast</keyword>
<keyword id="KW-0934">Plastid</keyword>
<keyword id="KW-1185">Reference proteome</keyword>
<keyword id="KW-0687">Ribonucleoprotein</keyword>
<keyword id="KW-0689">Ribosomal protein</keyword>
<name>RK36_ORYSJ</name>
<organism>
    <name type="scientific">Oryza sativa subsp. japonica</name>
    <name type="common">Rice</name>
    <dbReference type="NCBI Taxonomy" id="39947"/>
    <lineage>
        <taxon>Eukaryota</taxon>
        <taxon>Viridiplantae</taxon>
        <taxon>Streptophyta</taxon>
        <taxon>Embryophyta</taxon>
        <taxon>Tracheophyta</taxon>
        <taxon>Spermatophyta</taxon>
        <taxon>Magnoliopsida</taxon>
        <taxon>Liliopsida</taxon>
        <taxon>Poales</taxon>
        <taxon>Poaceae</taxon>
        <taxon>BOP clade</taxon>
        <taxon>Oryzoideae</taxon>
        <taxon>Oryzeae</taxon>
        <taxon>Oryzinae</taxon>
        <taxon>Oryza</taxon>
        <taxon>Oryza sativa</taxon>
    </lineage>
</organism>
<sequence>MKIRASVRKICTKCRLIRRRGRIRVICSNPKHKQRQG</sequence>
<dbReference type="EMBL" id="X15901">
    <property type="protein sequence ID" value="CAA33981.1"/>
    <property type="molecule type" value="Genomic_DNA"/>
</dbReference>
<dbReference type="EMBL" id="AY522330">
    <property type="status" value="NOT_ANNOTATED_CDS"/>
    <property type="molecule type" value="Genomic_DNA"/>
</dbReference>
<dbReference type="PIR" id="JQ0260">
    <property type="entry name" value="R5RZ36"/>
</dbReference>
<dbReference type="RefSeq" id="NP_039419.1">
    <property type="nucleotide sequence ID" value="NC_001320.1"/>
</dbReference>
<dbReference type="SMR" id="P62727"/>
<dbReference type="FunCoup" id="P62727">
    <property type="interactions" value="24"/>
</dbReference>
<dbReference type="STRING" id="39947.P62727"/>
<dbReference type="PaxDb" id="39947-P62727"/>
<dbReference type="EnsemblPlants" id="transcript-rpl36">
    <property type="protein sequence ID" value="cds-CAA33981.1"/>
    <property type="gene ID" value="gene-rpl36"/>
</dbReference>
<dbReference type="GeneID" id="3131430"/>
<dbReference type="Gramene" id="transcript-rpl36">
    <property type="protein sequence ID" value="cds-CAA33981.1"/>
    <property type="gene ID" value="gene-rpl36"/>
</dbReference>
<dbReference type="KEGG" id="dosa:rpl36"/>
<dbReference type="KEGG" id="osa:3131430"/>
<dbReference type="InParanoid" id="P62727"/>
<dbReference type="Proteomes" id="UP000059680">
    <property type="component" value="Chloroplast"/>
</dbReference>
<dbReference type="GO" id="GO:0009507">
    <property type="term" value="C:chloroplast"/>
    <property type="evidence" value="ECO:0007669"/>
    <property type="project" value="UniProtKB-SubCell"/>
</dbReference>
<dbReference type="GO" id="GO:0009536">
    <property type="term" value="C:plastid"/>
    <property type="evidence" value="ECO:0000305"/>
    <property type="project" value="Gramene"/>
</dbReference>
<dbReference type="GO" id="GO:1990904">
    <property type="term" value="C:ribonucleoprotein complex"/>
    <property type="evidence" value="ECO:0007669"/>
    <property type="project" value="UniProtKB-KW"/>
</dbReference>
<dbReference type="GO" id="GO:0005840">
    <property type="term" value="C:ribosome"/>
    <property type="evidence" value="ECO:0007669"/>
    <property type="project" value="UniProtKB-KW"/>
</dbReference>
<dbReference type="GO" id="GO:0003735">
    <property type="term" value="F:structural constituent of ribosome"/>
    <property type="evidence" value="ECO:0007669"/>
    <property type="project" value="InterPro"/>
</dbReference>
<dbReference type="GO" id="GO:0006412">
    <property type="term" value="P:translation"/>
    <property type="evidence" value="ECO:0007669"/>
    <property type="project" value="UniProtKB-UniRule"/>
</dbReference>
<dbReference type="HAMAP" id="MF_00251">
    <property type="entry name" value="Ribosomal_bL36"/>
    <property type="match status" value="1"/>
</dbReference>
<dbReference type="InterPro" id="IPR000473">
    <property type="entry name" value="Ribosomal_bL36"/>
</dbReference>
<dbReference type="InterPro" id="IPR035977">
    <property type="entry name" value="Ribosomal_bL36_sp"/>
</dbReference>
<dbReference type="NCBIfam" id="TIGR01022">
    <property type="entry name" value="rpmJ_bact"/>
    <property type="match status" value="1"/>
</dbReference>
<dbReference type="PANTHER" id="PTHR42888">
    <property type="entry name" value="50S RIBOSOMAL PROTEIN L36, CHLOROPLASTIC"/>
    <property type="match status" value="1"/>
</dbReference>
<dbReference type="PANTHER" id="PTHR42888:SF1">
    <property type="entry name" value="LARGE RIBOSOMAL SUBUNIT PROTEIN BL36C"/>
    <property type="match status" value="1"/>
</dbReference>
<dbReference type="Pfam" id="PF00444">
    <property type="entry name" value="Ribosomal_L36"/>
    <property type="match status" value="1"/>
</dbReference>
<dbReference type="SUPFAM" id="SSF57840">
    <property type="entry name" value="Ribosomal protein L36"/>
    <property type="match status" value="1"/>
</dbReference>
<dbReference type="PROSITE" id="PS00828">
    <property type="entry name" value="RIBOSOMAL_L36"/>
    <property type="match status" value="1"/>
</dbReference>
<proteinExistence type="inferred from homology"/>
<feature type="chain" id="PRO_0000290057" description="Large ribosomal subunit protein bL36c">
    <location>
        <begin position="1"/>
        <end position="37"/>
    </location>
</feature>
<geneLocation type="chloroplast"/>
<reference key="1">
    <citation type="journal article" date="1989" name="Mol. Gen. Genet.">
        <title>The complete sequence of the rice (Oryza sativa) chloroplast genome: intermolecular recombination between distinct tRNA genes accounts for a major plastid DNA inversion during the evolution of the cereals.</title>
        <authorList>
            <person name="Hiratsuka J."/>
            <person name="Shimada H."/>
            <person name="Whittier R."/>
            <person name="Ishibashi T."/>
            <person name="Sakamoto M."/>
            <person name="Mori M."/>
            <person name="Kondo C."/>
            <person name="Honji Y."/>
            <person name="Sun C.-R."/>
            <person name="Meng B.-Y."/>
            <person name="Li Y.-Q."/>
            <person name="Kanno A."/>
            <person name="Nishizawa Y."/>
            <person name="Hirai A."/>
            <person name="Shinozaki K."/>
            <person name="Sugiura M."/>
        </authorList>
    </citation>
    <scope>NUCLEOTIDE SEQUENCE [LARGE SCALE GENOMIC DNA]</scope>
    <source>
        <strain>cv. Nipponbare</strain>
    </source>
</reference>
<reference key="2">
    <citation type="journal article" date="2004" name="Plant Physiol.">
        <title>A comparison of rice chloroplast genomes.</title>
        <authorList>
            <person name="Tang J."/>
            <person name="Xia H."/>
            <person name="Cao M."/>
            <person name="Zhang X."/>
            <person name="Zeng W."/>
            <person name="Hu S."/>
            <person name="Tong W."/>
            <person name="Wang J."/>
            <person name="Wang J."/>
            <person name="Yu J."/>
            <person name="Yang H."/>
            <person name="Zhu L."/>
        </authorList>
    </citation>
    <scope>NUCLEOTIDE SEQUENCE [LARGE SCALE GENOMIC DNA]</scope>
    <source>
        <strain>cv. Nipponbare</strain>
    </source>
</reference>
<protein>
    <recommendedName>
        <fullName evidence="1">Large ribosomal subunit protein bL36c</fullName>
    </recommendedName>
    <alternativeName>
        <fullName>50S ribosomal protein L36, chloroplastic</fullName>
    </alternativeName>
</protein>
<comment type="subcellular location">
    <subcellularLocation>
        <location>Plastid</location>
        <location>Chloroplast</location>
    </subcellularLocation>
</comment>
<comment type="similarity">
    <text evidence="1">Belongs to the bacterial ribosomal protein bL36 family.</text>
</comment>
<evidence type="ECO:0000305" key="1"/>